<protein>
    <recommendedName>
        <fullName evidence="1">Probable protein kinase UbiB</fullName>
        <ecNumber evidence="1">2.7.-.-</ecNumber>
    </recommendedName>
    <alternativeName>
        <fullName evidence="1">Ubiquinone biosynthesis protein UbiB</fullName>
    </alternativeName>
</protein>
<feature type="chain" id="PRO_1000123931" description="Probable protein kinase UbiB">
    <location>
        <begin position="1"/>
        <end position="557"/>
    </location>
</feature>
<feature type="transmembrane region" description="Helical" evidence="1">
    <location>
        <begin position="506"/>
        <end position="526"/>
    </location>
</feature>
<feature type="transmembrane region" description="Helical" evidence="1">
    <location>
        <begin position="535"/>
        <end position="555"/>
    </location>
</feature>
<feature type="domain" description="Protein kinase" evidence="1">
    <location>
        <begin position="121"/>
        <end position="509"/>
    </location>
</feature>
<feature type="active site" description="Proton acceptor" evidence="1">
    <location>
        <position position="289"/>
    </location>
</feature>
<feature type="binding site" evidence="1">
    <location>
        <begin position="127"/>
        <end position="135"/>
    </location>
    <ligand>
        <name>ATP</name>
        <dbReference type="ChEBI" id="CHEBI:30616"/>
    </ligand>
</feature>
<feature type="binding site" evidence="1">
    <location>
        <position position="154"/>
    </location>
    <ligand>
        <name>ATP</name>
        <dbReference type="ChEBI" id="CHEBI:30616"/>
    </ligand>
</feature>
<accession>B0RLZ0</accession>
<sequence>MKTILRASRIGRVILRYRLDALLEGTPAERWLRLAKPFVPRASAEIAAQSRGARLRLALQELGPIFVKFGQILSTRRDLIPPDVAEELTLLQDRVKPFDGEAARLIVERALGLPVSVAFAAFDTTPLASASIAQVHAATLPPDANGLRREVVVKVLRPDIERQIDADIALLHSLATLVERTHPRADKIRPREVVAEIEGTLSAELDLQREGANASVLRRFWEGSDDLYVPEVIWSHTAERALTLERVYGIPSDDVAKLDAAGIDRKALAAKGVRVFYTQVFRDNFFHADAHAGNIWVDSDPERCLNPRFIALDFGIMGQLSQEDQYYLAENFMAIFHKDYRRMAELHVEAGWMPSNVRIDELEAAARSVCEPYFTRPLSEISLAEVLIKLFRVAQRYELTLQPQLILLQKTLLNIEGVGRQLDPKLDIWAVARPVLERILRERYSPRRVLGELRKRLPEIMTHAPDMPRLVHSWLKQQVEGRHQLDIRSSELRALDLSLRKLQTRVVTAITGSGLLVVAAVLYGLHPNGWYLGTVPVWSWISGGAGSAALLIAWLRR</sequence>
<evidence type="ECO:0000255" key="1">
    <source>
        <dbReference type="HAMAP-Rule" id="MF_00414"/>
    </source>
</evidence>
<keyword id="KW-0067">ATP-binding</keyword>
<keyword id="KW-0997">Cell inner membrane</keyword>
<keyword id="KW-1003">Cell membrane</keyword>
<keyword id="KW-0418">Kinase</keyword>
<keyword id="KW-0472">Membrane</keyword>
<keyword id="KW-0547">Nucleotide-binding</keyword>
<keyword id="KW-0808">Transferase</keyword>
<keyword id="KW-0812">Transmembrane</keyword>
<keyword id="KW-1133">Transmembrane helix</keyword>
<keyword id="KW-0831">Ubiquinone biosynthesis</keyword>
<gene>
    <name evidence="1" type="primary">ubiB</name>
    <name type="ordered locus">xcc-b100_0246</name>
</gene>
<reference key="1">
    <citation type="journal article" date="2008" name="J. Biotechnol.">
        <title>The genome of Xanthomonas campestris pv. campestris B100 and its use for the reconstruction of metabolic pathways involved in xanthan biosynthesis.</title>
        <authorList>
            <person name="Vorhoelter F.-J."/>
            <person name="Schneiker S."/>
            <person name="Goesmann A."/>
            <person name="Krause L."/>
            <person name="Bekel T."/>
            <person name="Kaiser O."/>
            <person name="Linke B."/>
            <person name="Patschkowski T."/>
            <person name="Rueckert C."/>
            <person name="Schmid J."/>
            <person name="Sidhu V.K."/>
            <person name="Sieber V."/>
            <person name="Tauch A."/>
            <person name="Watt S.A."/>
            <person name="Weisshaar B."/>
            <person name="Becker A."/>
            <person name="Niehaus K."/>
            <person name="Puehler A."/>
        </authorList>
    </citation>
    <scope>NUCLEOTIDE SEQUENCE [LARGE SCALE GENOMIC DNA]</scope>
    <source>
        <strain>B100</strain>
    </source>
</reference>
<dbReference type="EC" id="2.7.-.-" evidence="1"/>
<dbReference type="EMBL" id="AM920689">
    <property type="protein sequence ID" value="CAP49577.1"/>
    <property type="molecule type" value="Genomic_DNA"/>
</dbReference>
<dbReference type="SMR" id="B0RLZ0"/>
<dbReference type="KEGG" id="xca:xcc-b100_0246"/>
<dbReference type="HOGENOM" id="CLU_006533_0_0_6"/>
<dbReference type="UniPathway" id="UPA00232"/>
<dbReference type="Proteomes" id="UP000001188">
    <property type="component" value="Chromosome"/>
</dbReference>
<dbReference type="GO" id="GO:0005886">
    <property type="term" value="C:plasma membrane"/>
    <property type="evidence" value="ECO:0007669"/>
    <property type="project" value="UniProtKB-SubCell"/>
</dbReference>
<dbReference type="GO" id="GO:0005524">
    <property type="term" value="F:ATP binding"/>
    <property type="evidence" value="ECO:0007669"/>
    <property type="project" value="UniProtKB-KW"/>
</dbReference>
<dbReference type="GO" id="GO:0004672">
    <property type="term" value="F:protein kinase activity"/>
    <property type="evidence" value="ECO:0007669"/>
    <property type="project" value="UniProtKB-UniRule"/>
</dbReference>
<dbReference type="GO" id="GO:0010795">
    <property type="term" value="P:regulation of ubiquinone biosynthetic process"/>
    <property type="evidence" value="ECO:0007669"/>
    <property type="project" value="UniProtKB-UniRule"/>
</dbReference>
<dbReference type="GO" id="GO:0006744">
    <property type="term" value="P:ubiquinone biosynthetic process"/>
    <property type="evidence" value="ECO:0007669"/>
    <property type="project" value="UniProtKB-UniPathway"/>
</dbReference>
<dbReference type="CDD" id="cd13972">
    <property type="entry name" value="UbiB"/>
    <property type="match status" value="1"/>
</dbReference>
<dbReference type="HAMAP" id="MF_00414">
    <property type="entry name" value="UbiB"/>
    <property type="match status" value="1"/>
</dbReference>
<dbReference type="InterPro" id="IPR004147">
    <property type="entry name" value="ABC1_dom"/>
</dbReference>
<dbReference type="InterPro" id="IPR011009">
    <property type="entry name" value="Kinase-like_dom_sf"/>
</dbReference>
<dbReference type="InterPro" id="IPR010232">
    <property type="entry name" value="UbiB"/>
</dbReference>
<dbReference type="InterPro" id="IPR045308">
    <property type="entry name" value="UbiB_bact"/>
</dbReference>
<dbReference type="InterPro" id="IPR050154">
    <property type="entry name" value="UbiB_kinase"/>
</dbReference>
<dbReference type="NCBIfam" id="NF003404">
    <property type="entry name" value="PRK04750.1"/>
    <property type="match status" value="1"/>
</dbReference>
<dbReference type="NCBIfam" id="TIGR01982">
    <property type="entry name" value="UbiB"/>
    <property type="match status" value="1"/>
</dbReference>
<dbReference type="PANTHER" id="PTHR10566">
    <property type="entry name" value="CHAPERONE-ACTIVITY OF BC1 COMPLEX CABC1 -RELATED"/>
    <property type="match status" value="1"/>
</dbReference>
<dbReference type="PANTHER" id="PTHR10566:SF113">
    <property type="entry name" value="PROTEIN ACTIVITY OF BC1 COMPLEX KINASE 7, CHLOROPLASTIC"/>
    <property type="match status" value="1"/>
</dbReference>
<dbReference type="Pfam" id="PF03109">
    <property type="entry name" value="ABC1"/>
    <property type="match status" value="1"/>
</dbReference>
<dbReference type="SUPFAM" id="SSF56112">
    <property type="entry name" value="Protein kinase-like (PK-like)"/>
    <property type="match status" value="1"/>
</dbReference>
<comment type="function">
    <text evidence="1">Is probably a protein kinase regulator of UbiI activity which is involved in aerobic coenzyme Q (ubiquinone) biosynthesis.</text>
</comment>
<comment type="pathway">
    <text>Cofactor biosynthesis; ubiquinone biosynthesis [regulation].</text>
</comment>
<comment type="subcellular location">
    <subcellularLocation>
        <location evidence="1">Cell inner membrane</location>
        <topology evidence="1">Multi-pass membrane protein</topology>
    </subcellularLocation>
</comment>
<comment type="similarity">
    <text evidence="1">Belongs to the ABC1 family. UbiB subfamily.</text>
</comment>
<organism>
    <name type="scientific">Xanthomonas campestris pv. campestris (strain B100)</name>
    <dbReference type="NCBI Taxonomy" id="509169"/>
    <lineage>
        <taxon>Bacteria</taxon>
        <taxon>Pseudomonadati</taxon>
        <taxon>Pseudomonadota</taxon>
        <taxon>Gammaproteobacteria</taxon>
        <taxon>Lysobacterales</taxon>
        <taxon>Lysobacteraceae</taxon>
        <taxon>Xanthomonas</taxon>
    </lineage>
</organism>
<name>UBIB_XANCB</name>
<proteinExistence type="inferred from homology"/>